<name>M2_I54A2</name>
<keyword id="KW-0002">3D-structure</keyword>
<keyword id="KW-0025">Alternative splicing</keyword>
<keyword id="KW-1015">Disulfide bond</keyword>
<keyword id="KW-0325">Glycoprotein</keyword>
<keyword id="KW-1032">Host cell membrane</keyword>
<keyword id="KW-1043">Host membrane</keyword>
<keyword id="KW-0945">Host-virus interaction</keyword>
<keyword id="KW-0375">Hydrogen ion transport</keyword>
<keyword id="KW-1083">Inhibition of host autophagy by virus</keyword>
<keyword id="KW-0407">Ion channel</keyword>
<keyword id="KW-0406">Ion transport</keyword>
<keyword id="KW-0449">Lipoprotein</keyword>
<keyword id="KW-0472">Membrane</keyword>
<keyword id="KW-0564">Palmitate</keyword>
<keyword id="KW-0597">Phosphoprotein</keyword>
<keyword id="KW-0735">Signal-anchor</keyword>
<keyword id="KW-0812">Transmembrane</keyword>
<keyword id="KW-1133">Transmembrane helix</keyword>
<keyword id="KW-0813">Transport</keyword>
<keyword id="KW-1182">Viral ion channel</keyword>
<keyword id="KW-0946">Virion</keyword>
<gene>
    <name evidence="1" type="primary">M</name>
    <name type="synonym">M2</name>
</gene>
<feature type="chain" id="PRO_0000372924" description="Matrix protein 2">
    <location>
        <begin position="1"/>
        <end position="97"/>
    </location>
</feature>
<feature type="topological domain" description="Virion surface" evidence="1">
    <location>
        <begin position="1"/>
        <end position="22"/>
    </location>
</feature>
<feature type="transmembrane region" description="Helical; Signal-anchor for type III membrane protein" evidence="1">
    <location>
        <begin position="23"/>
        <end position="43"/>
    </location>
</feature>
<feature type="topological domain" description="Intravirion" evidence="1">
    <location>
        <begin position="44"/>
        <end position="97"/>
    </location>
</feature>
<feature type="region of interest" description="Disordered" evidence="2">
    <location>
        <begin position="59"/>
        <end position="85"/>
    </location>
</feature>
<feature type="compositionally biased region" description="Basic and acidic residues" evidence="2">
    <location>
        <begin position="71"/>
        <end position="80"/>
    </location>
</feature>
<feature type="site" description="Essential for channel activity, possibly by being protonated during channel activation, and by forming the channel gate and the selective filter" evidence="1">
    <location>
        <position position="37"/>
    </location>
</feature>
<feature type="site" description="Seems to be involved in pH gating" evidence="1">
    <location>
        <position position="41"/>
    </location>
</feature>
<feature type="modified residue" description="Phosphoserine; by host" evidence="1">
    <location>
        <position position="64"/>
    </location>
</feature>
<feature type="modified residue" description="Phosphoserine; by host" evidence="1">
    <location>
        <position position="82"/>
    </location>
</feature>
<feature type="lipid moiety-binding region" description="S-palmitoyl cysteine; by host" evidence="1">
    <location>
        <position position="50"/>
    </location>
</feature>
<feature type="glycosylation site" description="N-linked (GlcNAc...) asparagine; by host" evidence="1">
    <location>
        <position position="20"/>
    </location>
</feature>
<feature type="disulfide bond" description="Interchain (with C-17)" evidence="1">
    <location>
        <position position="17"/>
    </location>
</feature>
<feature type="disulfide bond" description="Interchain (with C-19)" evidence="1">
    <location>
        <position position="19"/>
    </location>
</feature>
<protein>
    <recommendedName>
        <fullName evidence="1">Matrix protein 2</fullName>
    </recommendedName>
    <alternativeName>
        <fullName evidence="1">Proton channel protein M2</fullName>
    </alternativeName>
</protein>
<proteinExistence type="evidence at protein level"/>
<evidence type="ECO:0000255" key="1">
    <source>
        <dbReference type="HAMAP-Rule" id="MF_04069"/>
    </source>
</evidence>
<evidence type="ECO:0000256" key="2">
    <source>
        <dbReference type="SAM" id="MobiDB-lite"/>
    </source>
</evidence>
<comment type="function">
    <text evidence="1">Forms a proton-selective ion channel that is necessary for the efficient release of the viral genome during virus entry. After attaching to the cell surface, the virion enters the cell by endocytosis. Acidification of the endosome triggers M2 ion channel activity. The influx of protons into virion interior is believed to disrupt interactions between the viral ribonucleoprotein (RNP), matrix protein 1 (M1), and lipid bilayers, thereby freeing the viral genome from interaction with viral proteins and enabling RNA segments to migrate to the host cell nucleus, where influenza virus RNA transcription and replication occur. Also plays a role in viral proteins secretory pathway. Elevates the intravesicular pH of normally acidic compartments, such as trans-Golgi network, preventing newly formed hemagglutinin from premature switching to the fusion-active conformation.</text>
</comment>
<comment type="activity regulation">
    <text>The M2 protein from most influenza A strains is inhibited by amantadine and rimantadine, resulting in viral uncoating incapacity. Emergence of amantadine-resistant variants is usually rapid.</text>
</comment>
<comment type="subunit">
    <text evidence="1">Homotetramer; composed of two disulfide-linked dimers held together by non-covalent interactions. May interact with matrix protein 1.</text>
</comment>
<comment type="subcellular location">
    <subcellularLocation>
        <location evidence="1">Virion membrane</location>
    </subcellularLocation>
    <subcellularLocation>
        <location evidence="1">Host apical cell membrane</location>
        <topology evidence="1">Single-pass type III membrane protein</topology>
    </subcellularLocation>
    <text evidence="1">Abundantly expressed at the apical plasma membrane in infected polarized epithelial cells, in close proximity to budding and assembled virions. Minor component of virions (only 16-20 molecules/virion).</text>
</comment>
<comment type="alternative products">
    <event type="alternative splicing"/>
    <isoform>
        <id>A4K144-1</id>
        <name>M2</name>
        <sequence type="displayed"/>
    </isoform>
    <isoform>
        <id>A4K145-1</id>
        <name>M1</name>
        <sequence type="external"/>
    </isoform>
    <text>Only the first 9 residues are shared by the 2 isoforms.</text>
</comment>
<comment type="domain">
    <text evidence="1">Cytoplasmic tail plays an important role in virion assembly and morphogenesis.</text>
</comment>
<comment type="miscellaneous">
    <text evidence="1">When the channel is activated, one or more imidazole moieties of His-37 probably become bi-protonated.</text>
</comment>
<comment type="similarity">
    <text evidence="1">Belongs to the influenza viruses matrix protein M2 family.</text>
</comment>
<organismHost>
    <name type="scientific">Aves</name>
    <dbReference type="NCBI Taxonomy" id="8782"/>
</organismHost>
<organismHost>
    <name type="scientific">Homo sapiens</name>
    <name type="common">Human</name>
    <dbReference type="NCBI Taxonomy" id="9606"/>
</organismHost>
<organismHost>
    <name type="scientific">Sus scrofa</name>
    <name type="common">Pig</name>
    <dbReference type="NCBI Taxonomy" id="9823"/>
</organismHost>
<sequence length="97" mass="11178">MSLLTEVETPIRNEWGCRCNDSSDPLIIAASVVGILHLILWILDRLFFKCIYRLFKHGLKRGPSTEGVPESMREEYRKEQQSAVDADDSHFVNIELE</sequence>
<reference key="1">
    <citation type="submission" date="2007-03" db="EMBL/GenBank/DDBJ databases">
        <title>The NIAID influenza genome sequencing project.</title>
        <authorList>
            <person name="Ghedin E."/>
            <person name="Spiro D."/>
            <person name="Miller N."/>
            <person name="Zaborsky J."/>
            <person name="Feldblyum T."/>
            <person name="Subbu V."/>
            <person name="Shumway M."/>
            <person name="Sparenborg J."/>
            <person name="Groveman L."/>
            <person name="Halpin R."/>
            <person name="Sitz J."/>
            <person name="Koo H."/>
            <person name="Salzberg S.L."/>
            <person name="Webster R.G."/>
            <person name="Hoffmann E."/>
            <person name="Krauss S."/>
            <person name="Naeve C."/>
            <person name="Bao Y."/>
            <person name="Bolotov P."/>
            <person name="Dernovoy D."/>
            <person name="Kiryutin B."/>
            <person name="Lipman D.J."/>
            <person name="Tatusova T."/>
        </authorList>
    </citation>
    <scope>NUCLEOTIDE SEQUENCE [GENOMIC RNA]</scope>
</reference>
<reference key="2">
    <citation type="submission" date="2007-03" db="EMBL/GenBank/DDBJ databases">
        <authorList>
            <consortium name="The NIAID Influenza Genome Sequencing Consortium"/>
        </authorList>
    </citation>
    <scope>NUCLEOTIDE SEQUENCE [GENOMIC RNA]</scope>
</reference>
<organism>
    <name type="scientific">Influenza A virus (strain A/Malaysia:Malaya/302/1954 H1N1)</name>
    <dbReference type="NCBI Taxonomy" id="425566"/>
    <lineage>
        <taxon>Viruses</taxon>
        <taxon>Riboviria</taxon>
        <taxon>Orthornavirae</taxon>
        <taxon>Negarnaviricota</taxon>
        <taxon>Polyploviricotina</taxon>
        <taxon>Insthoviricetes</taxon>
        <taxon>Articulavirales</taxon>
        <taxon>Orthomyxoviridae</taxon>
        <taxon>Alphainfluenzavirus</taxon>
        <taxon>Alphainfluenzavirus influenzae</taxon>
        <taxon>Influenza A virus</taxon>
    </lineage>
</organism>
<accession>A4K144</accession>
<dbReference type="EMBL" id="CY021054">
    <property type="protein sequence ID" value="ABO52282.1"/>
    <property type="molecule type" value="Viral_cRNA"/>
</dbReference>
<dbReference type="PDB" id="8BDZ">
    <property type="method" value="EM"/>
    <property type="resolution" value="3.13 A"/>
    <property type="chains" value="A/B/C=2-24"/>
</dbReference>
<dbReference type="PDB" id="8BER">
    <property type="method" value="EM"/>
    <property type="resolution" value="4.00 A"/>
    <property type="chains" value="A/B/C=2-24"/>
</dbReference>
<dbReference type="PDBsum" id="8BDZ"/>
<dbReference type="PDBsum" id="8BER"/>
<dbReference type="SMR" id="A4K144"/>
<dbReference type="GlyCosmos" id="A4K144">
    <property type="glycosylation" value="1 site, No reported glycans"/>
</dbReference>
<dbReference type="Proteomes" id="UP000008219">
    <property type="component" value="Genome"/>
</dbReference>
<dbReference type="GO" id="GO:0020002">
    <property type="term" value="C:host cell plasma membrane"/>
    <property type="evidence" value="ECO:0007669"/>
    <property type="project" value="UniProtKB-SubCell"/>
</dbReference>
<dbReference type="GO" id="GO:0016020">
    <property type="term" value="C:membrane"/>
    <property type="evidence" value="ECO:0007669"/>
    <property type="project" value="UniProtKB-UniRule"/>
</dbReference>
<dbReference type="GO" id="GO:0055036">
    <property type="term" value="C:virion membrane"/>
    <property type="evidence" value="ECO:0007669"/>
    <property type="project" value="UniProtKB-SubCell"/>
</dbReference>
<dbReference type="GO" id="GO:0005216">
    <property type="term" value="F:monoatomic ion channel activity"/>
    <property type="evidence" value="ECO:0007669"/>
    <property type="project" value="UniProtKB-UniRule"/>
</dbReference>
<dbReference type="GO" id="GO:0015078">
    <property type="term" value="F:proton transmembrane transporter activity"/>
    <property type="evidence" value="ECO:0007669"/>
    <property type="project" value="UniProtKB-UniRule"/>
</dbReference>
<dbReference type="GO" id="GO:0051259">
    <property type="term" value="P:protein complex oligomerization"/>
    <property type="evidence" value="ECO:0007669"/>
    <property type="project" value="UniProtKB-UniRule"/>
</dbReference>
<dbReference type="GO" id="GO:0044694">
    <property type="term" value="P:symbiont genome entry into host cell via pore formation in plasma membrane"/>
    <property type="evidence" value="ECO:0007669"/>
    <property type="project" value="UniProtKB-UniRule"/>
</dbReference>
<dbReference type="GO" id="GO:0140321">
    <property type="term" value="P:symbiont-mediated suppression of host autophagy"/>
    <property type="evidence" value="ECO:0007669"/>
    <property type="project" value="UniProtKB-KW"/>
</dbReference>
<dbReference type="Gene3D" id="6.10.250.1640">
    <property type="match status" value="1"/>
</dbReference>
<dbReference type="HAMAP" id="MF_04069">
    <property type="entry name" value="INFV_M2"/>
    <property type="match status" value="1"/>
</dbReference>
<dbReference type="InterPro" id="IPR002089">
    <property type="entry name" value="Flu_M2"/>
</dbReference>
<dbReference type="Pfam" id="PF00599">
    <property type="entry name" value="Flu_M2"/>
    <property type="match status" value="1"/>
</dbReference>